<proteinExistence type="inferred from homology"/>
<sequence length="595" mass="68580">MAETDIAMPESTPVDSRPAFAIVEELKTKFGENFYVQATFEEFPTVWVERARVQEVLMFLRKVERPYVMLFDLSAMDERLRQHRDGLPASDFTVFYHLLSLERNSDIRIKVALNENDLNLPTATNIWPNANWYEREAYDMFGINFEGHPMLRRILLPTYWEGHPLRKEYSARATEYTPYMQDKAKQDFEQEHLRFVPEDWGLKRGNADEDFMFLNLGPNHPSAHGAFRIVLQLDGEEVKDCVPDIGYHHRGVEKMAERQTWHSFIPYTDRVDYLGGCAQNMPYVMAVEQLAGIKVPERAQVIRVMLNELFRINNHLLYCGTAIQDAGGMTPVFYMFADRQKVYDIVEAITGYRMHPAWFRIGGTAHDLPNNWQKLVKELLDWMPKRLNEYYTAAFKNSVFIGRTRNVAQYDAKSALAWGVTGTGLRATGIDFDVRKYRPYSGYENFDFEVPVEYEGDAYARVLVHFREIEQSLKIIKQCLDNMPSGPYKADHPLAVPPPKDKTLQDIETLITHFLSVSWGPVMPAGEASFMTEVVKGASTYYLTSDKATMSYRTRIRTPTFTHLQQIPSVINGSLVSDLIIYLATIDVVMADVDR</sequence>
<dbReference type="EC" id="7.1.1.-" evidence="1"/>
<dbReference type="EMBL" id="CP001182">
    <property type="protein sequence ID" value="ACJ40600.1"/>
    <property type="molecule type" value="Genomic_DNA"/>
</dbReference>
<dbReference type="RefSeq" id="WP_000852150.1">
    <property type="nucleotide sequence ID" value="NC_011586.2"/>
</dbReference>
<dbReference type="SMR" id="B7I741"/>
<dbReference type="GeneID" id="92892684"/>
<dbReference type="KEGG" id="abn:AB57_0802"/>
<dbReference type="HOGENOM" id="CLU_015134_3_2_6"/>
<dbReference type="Proteomes" id="UP000007094">
    <property type="component" value="Chromosome"/>
</dbReference>
<dbReference type="GO" id="GO:0030964">
    <property type="term" value="C:NADH dehydrogenase complex"/>
    <property type="evidence" value="ECO:0007669"/>
    <property type="project" value="InterPro"/>
</dbReference>
<dbReference type="GO" id="GO:0005886">
    <property type="term" value="C:plasma membrane"/>
    <property type="evidence" value="ECO:0007669"/>
    <property type="project" value="UniProtKB-SubCell"/>
</dbReference>
<dbReference type="GO" id="GO:0051287">
    <property type="term" value="F:NAD binding"/>
    <property type="evidence" value="ECO:0007669"/>
    <property type="project" value="InterPro"/>
</dbReference>
<dbReference type="GO" id="GO:0008137">
    <property type="term" value="F:NADH dehydrogenase (ubiquinone) activity"/>
    <property type="evidence" value="ECO:0007669"/>
    <property type="project" value="InterPro"/>
</dbReference>
<dbReference type="GO" id="GO:0050136">
    <property type="term" value="F:NADH:ubiquinone reductase (non-electrogenic) activity"/>
    <property type="evidence" value="ECO:0007669"/>
    <property type="project" value="UniProtKB-UniRule"/>
</dbReference>
<dbReference type="GO" id="GO:0048038">
    <property type="term" value="F:quinone binding"/>
    <property type="evidence" value="ECO:0007669"/>
    <property type="project" value="UniProtKB-KW"/>
</dbReference>
<dbReference type="FunFam" id="1.10.645.10:FF:000001">
    <property type="entry name" value="NADH-quinone oxidoreductase subunit C/D"/>
    <property type="match status" value="1"/>
</dbReference>
<dbReference type="Gene3D" id="1.10.645.10">
    <property type="entry name" value="Cytochrome-c3 Hydrogenase, chain B"/>
    <property type="match status" value="1"/>
</dbReference>
<dbReference type="Gene3D" id="3.30.460.80">
    <property type="entry name" value="NADH:ubiquinone oxidoreductase, 30kDa subunit"/>
    <property type="match status" value="1"/>
</dbReference>
<dbReference type="HAMAP" id="MF_01357">
    <property type="entry name" value="NDH1_NuoC"/>
    <property type="match status" value="1"/>
</dbReference>
<dbReference type="HAMAP" id="MF_01359">
    <property type="entry name" value="NDH1_NuoCD_1"/>
    <property type="match status" value="1"/>
</dbReference>
<dbReference type="HAMAP" id="MF_01358">
    <property type="entry name" value="NDH1_NuoD"/>
    <property type="match status" value="1"/>
</dbReference>
<dbReference type="InterPro" id="IPR010218">
    <property type="entry name" value="NADH_DH_suC"/>
</dbReference>
<dbReference type="InterPro" id="IPR023062">
    <property type="entry name" value="NADH_DH_suCD"/>
</dbReference>
<dbReference type="InterPro" id="IPR001135">
    <property type="entry name" value="NADH_Q_OxRdtase_suD"/>
</dbReference>
<dbReference type="InterPro" id="IPR037232">
    <property type="entry name" value="NADH_quin_OxRdtase_su_C/D-like"/>
</dbReference>
<dbReference type="InterPro" id="IPR001268">
    <property type="entry name" value="NADH_UbQ_OxRdtase_30kDa_su"/>
</dbReference>
<dbReference type="InterPro" id="IPR014029">
    <property type="entry name" value="NADH_UbQ_OxRdtase_49kDa_CS"/>
</dbReference>
<dbReference type="InterPro" id="IPR020396">
    <property type="entry name" value="NADH_UbQ_OxRdtase_CS"/>
</dbReference>
<dbReference type="InterPro" id="IPR022885">
    <property type="entry name" value="NDH1_su_D/H"/>
</dbReference>
<dbReference type="InterPro" id="IPR029014">
    <property type="entry name" value="NiFe-Hase_large"/>
</dbReference>
<dbReference type="NCBIfam" id="TIGR01961">
    <property type="entry name" value="NuoC_fam"/>
    <property type="match status" value="1"/>
</dbReference>
<dbReference type="NCBIfam" id="TIGR01962">
    <property type="entry name" value="NuoD"/>
    <property type="match status" value="1"/>
</dbReference>
<dbReference type="NCBIfam" id="NF004739">
    <property type="entry name" value="PRK06075.1"/>
    <property type="match status" value="1"/>
</dbReference>
<dbReference type="NCBIfam" id="NF008728">
    <property type="entry name" value="PRK11742.1"/>
    <property type="match status" value="1"/>
</dbReference>
<dbReference type="PANTHER" id="PTHR11993:SF45">
    <property type="entry name" value="NADH-QUINONE OXIDOREDUCTASE SUBUNIT C_D"/>
    <property type="match status" value="1"/>
</dbReference>
<dbReference type="PANTHER" id="PTHR11993">
    <property type="entry name" value="NADH-UBIQUINONE OXIDOREDUCTASE 49 KDA SUBUNIT"/>
    <property type="match status" value="1"/>
</dbReference>
<dbReference type="Pfam" id="PF00329">
    <property type="entry name" value="Complex1_30kDa"/>
    <property type="match status" value="1"/>
</dbReference>
<dbReference type="Pfam" id="PF00346">
    <property type="entry name" value="Complex1_49kDa"/>
    <property type="match status" value="1"/>
</dbReference>
<dbReference type="SUPFAM" id="SSF56762">
    <property type="entry name" value="HydB/Nqo4-like"/>
    <property type="match status" value="1"/>
</dbReference>
<dbReference type="SUPFAM" id="SSF143243">
    <property type="entry name" value="Nqo5-like"/>
    <property type="match status" value="1"/>
</dbReference>
<dbReference type="PROSITE" id="PS00542">
    <property type="entry name" value="COMPLEX1_30K"/>
    <property type="match status" value="1"/>
</dbReference>
<dbReference type="PROSITE" id="PS00535">
    <property type="entry name" value="COMPLEX1_49K"/>
    <property type="match status" value="1"/>
</dbReference>
<gene>
    <name evidence="1" type="primary">nuoC</name>
    <name evidence="1" type="synonym">nuoCD</name>
    <name evidence="1" type="synonym">nuoD</name>
    <name type="ordered locus">AB57_0802</name>
</gene>
<accession>B7I741</accession>
<protein>
    <recommendedName>
        <fullName evidence="1">NADH-quinone oxidoreductase subunit C/D</fullName>
        <ecNumber evidence="1">7.1.1.-</ecNumber>
    </recommendedName>
    <alternativeName>
        <fullName evidence="1">NADH dehydrogenase I subunit C/D</fullName>
    </alternativeName>
    <alternativeName>
        <fullName evidence="1">NDH-1 subunit C/D</fullName>
    </alternativeName>
</protein>
<evidence type="ECO:0000255" key="1">
    <source>
        <dbReference type="HAMAP-Rule" id="MF_01359"/>
    </source>
</evidence>
<name>NUOCD_ACIB5</name>
<feature type="chain" id="PRO_1000143683" description="NADH-quinone oxidoreductase subunit C/D">
    <location>
        <begin position="1"/>
        <end position="595"/>
    </location>
</feature>
<feature type="region of interest" description="NADH dehydrogenase I subunit C" evidence="1">
    <location>
        <begin position="1"/>
        <end position="186"/>
    </location>
</feature>
<feature type="region of interest" description="NADH dehydrogenase I subunit D" evidence="1">
    <location>
        <begin position="210"/>
        <end position="595"/>
    </location>
</feature>
<reference key="1">
    <citation type="journal article" date="2008" name="J. Bacteriol.">
        <title>Comparative genome sequence analysis of multidrug-resistant Acinetobacter baumannii.</title>
        <authorList>
            <person name="Adams M.D."/>
            <person name="Goglin K."/>
            <person name="Molyneaux N."/>
            <person name="Hujer K.M."/>
            <person name="Lavender H."/>
            <person name="Jamison J.J."/>
            <person name="MacDonald I.J."/>
            <person name="Martin K.M."/>
            <person name="Russo T."/>
            <person name="Campagnari A.A."/>
            <person name="Hujer A.M."/>
            <person name="Bonomo R.A."/>
            <person name="Gill S.R."/>
        </authorList>
    </citation>
    <scope>NUCLEOTIDE SEQUENCE [LARGE SCALE GENOMIC DNA]</scope>
    <source>
        <strain>AB0057</strain>
    </source>
</reference>
<comment type="function">
    <text evidence="1">NDH-1 shuttles electrons from NADH, via FMN and iron-sulfur (Fe-S) centers, to quinones in the respiratory chain. The immediate electron acceptor for the enzyme in this species is believed to be ubiquinone. Couples the redox reaction to proton translocation (for every two electrons transferred, four hydrogen ions are translocated across the cytoplasmic membrane), and thus conserves the redox energy in a proton gradient.</text>
</comment>
<comment type="catalytic activity">
    <reaction evidence="1">
        <text>a quinone + NADH + 5 H(+)(in) = a quinol + NAD(+) + 4 H(+)(out)</text>
        <dbReference type="Rhea" id="RHEA:57888"/>
        <dbReference type="ChEBI" id="CHEBI:15378"/>
        <dbReference type="ChEBI" id="CHEBI:24646"/>
        <dbReference type="ChEBI" id="CHEBI:57540"/>
        <dbReference type="ChEBI" id="CHEBI:57945"/>
        <dbReference type="ChEBI" id="CHEBI:132124"/>
    </reaction>
</comment>
<comment type="subunit">
    <text evidence="1">NDH-1 is composed of 13 different subunits. Subunits NuoB, CD, E, F, and G constitute the peripheral sector of the complex.</text>
</comment>
<comment type="subcellular location">
    <subcellularLocation>
        <location evidence="1">Cell inner membrane</location>
        <topology evidence="1">Peripheral membrane protein</topology>
        <orientation evidence="1">Cytoplasmic side</orientation>
    </subcellularLocation>
</comment>
<comment type="similarity">
    <text evidence="1">In the N-terminal section; belongs to the complex I 30 kDa subunit family.</text>
</comment>
<comment type="similarity">
    <text evidence="1">In the C-terminal section; belongs to the complex I 49 kDa subunit family.</text>
</comment>
<keyword id="KW-0997">Cell inner membrane</keyword>
<keyword id="KW-1003">Cell membrane</keyword>
<keyword id="KW-0472">Membrane</keyword>
<keyword id="KW-0511">Multifunctional enzyme</keyword>
<keyword id="KW-0520">NAD</keyword>
<keyword id="KW-0874">Quinone</keyword>
<keyword id="KW-1278">Translocase</keyword>
<keyword id="KW-0813">Transport</keyword>
<keyword id="KW-0830">Ubiquinone</keyword>
<organism>
    <name type="scientific">Acinetobacter baumannii (strain AB0057)</name>
    <dbReference type="NCBI Taxonomy" id="480119"/>
    <lineage>
        <taxon>Bacteria</taxon>
        <taxon>Pseudomonadati</taxon>
        <taxon>Pseudomonadota</taxon>
        <taxon>Gammaproteobacteria</taxon>
        <taxon>Moraxellales</taxon>
        <taxon>Moraxellaceae</taxon>
        <taxon>Acinetobacter</taxon>
        <taxon>Acinetobacter calcoaceticus/baumannii complex</taxon>
    </lineage>
</organism>